<feature type="transit peptide" description="Mitochondrion" evidence="3">
    <location>
        <begin position="1"/>
        <end position="41"/>
    </location>
</feature>
<feature type="chain" id="PRO_0000031069" description="DNA-directed RNA polymerase, mitochondrial">
    <location>
        <begin position="42"/>
        <end position="1207"/>
    </location>
</feature>
<feature type="repeat" description="PPR 1">
    <location>
        <begin position="232"/>
        <end position="266"/>
    </location>
</feature>
<feature type="repeat" description="PPR 2">
    <location>
        <begin position="267"/>
        <end position="302"/>
    </location>
</feature>
<feature type="region of interest" description="Disordered" evidence="6">
    <location>
        <begin position="1"/>
        <end position="48"/>
    </location>
</feature>
<feature type="region of interest" description="Disordered" evidence="6">
    <location>
        <begin position="82"/>
        <end position="103"/>
    </location>
</feature>
<feature type="region of interest" description="Disordered" evidence="6">
    <location>
        <begin position="702"/>
        <end position="724"/>
    </location>
</feature>
<feature type="region of interest" description="Mediates interaction with TEFM" evidence="1">
    <location>
        <begin position="773"/>
        <end position="1207"/>
    </location>
</feature>
<feature type="active site" evidence="1">
    <location>
        <position position="893"/>
    </location>
</feature>
<feature type="active site" evidence="1">
    <location>
        <position position="962"/>
    </location>
</feature>
<feature type="active site" evidence="1">
    <location>
        <position position="1121"/>
    </location>
</feature>
<feature type="sequence conflict" description="In Ref. 1; BAC39500." evidence="8" ref="1">
    <original>H</original>
    <variation>Q</variation>
    <location>
        <position position="23"/>
    </location>
</feature>
<sequence length="1207" mass="136705">MSALRWTRSAAGLGRVLRSPGPHRPPSEEGTFGGFCSSRRSSAASPREQHVLREWGHAELLEVLEARVRQLRAEGTPEMRVKKVQVDRPPQGHSSRWAQKLEAEKRVKQRRQKEVDQQKQALTQEFWTLHKEPKIWNKKLAGYLQPSKKGTPTNSEEKQLAQALQAALGRLSSREAEALARKKAKAVEAQILVLQQKFLAFFECCVCTGQVPLAHHVLVTHHNNGDRQQVLTLHMYNTVMLGWARKGSFRELVYVFLMLKDAGLSPDLCSYAAALQCMGRRDQDVRTIQRCLKQMMEEGFQPQLLFTDLVLEEEDRAALLRAVVKAEPAFRPPPQAPSPVNTSTLLKDIYSKEGPVSYPKLHLPLDTLQDLFYQQLHVELSSSVCVQSVEKAPVMSKEVIEARKTLQALREQWEVELLRVLRETKATMGRQAYEGQPTLYPFLCLLSEGEFVSILMQVLKVLPAQGEPLIQLAHNLGLRVLNRHLVKQKQVTNHVQKLGQRYSQYLQLLASDTQVAPCLPREYWESLGPLEAPAQQPWSVPVLLQLGKQLAELLVQAVQMPRSLAARQGAQRSIPVLYHVYSFRSYRQVGILKPHPAFTHLLETAAEPTLTFETTEVPMLCPPLPWTSLHSGAYLLSSTKLMRATEGTTQHQRLLEQCPPAQLHGPLDALTQLGNCAWRVNGHLLDLVLQIFRDKGCMPLGVPPPRSEAPRPARYQLPPGSTPVHKSELRKELARCLKVAREMHSLRSEALYRLSLAQHLRHRVFWLPHNMDFRGRTYPCPPHFNHLGSDLARALLEFAEGRPLGPRGLDWLKIHLINLTGLKKGDSLRMRLAFADEVMEEILDSADNPLTGRKWWMEADEPWQTLACCMEVAHAVRSPDPAAYISHLPVHQDGSCNGLQHYAALGRDSVGAASVNLTPSDLPQDVYREVATQVEEFRQQDAKEGLRVAQVLEGFISRKVVKQTVMTVVYGVTRYGGRLQIEKRLRELSDFPQEFVWEASHYLVRQVFKSLQEMFTSTRAIQHWLTESANLISHAGWPVEWVTPLGIPIIQPYHRESKVQVKGGLQSITLTSSVDESQKPNTLKQKNGFPPNFIHSLDSSHMMLTALHCYRKGLIFVSVHDCFWTHAADIPTMNEVCREQFVRLHSQPILEDLAKFLKKRFCSVSSIKSLKSSERALVTKLQETLQSLPKTGTFDLGQVIRSTYFFS</sequence>
<gene>
    <name evidence="9" type="primary">Polrmt</name>
</gene>
<comment type="function">
    <text evidence="2">DNA-dependent RNA polymerase catalyzes the transcription of mitochondrial DNA into RNA using the four ribonucleoside triphosphates as substrates. Component of the mitochondrial transcription initiation complex, composed at least of TFB2M, TFAM and POLRMT that is required for basal transcription of mitochondrial DNA. In this complex, TFAM recruits POLRMT to a specific promoter whereas TFB2M induces structural changes in POLRMT to enable promoter opening and trapping of the DNA non-template strand. Has DNA primase activity. Catalyzes the synthesis of short RNA primers that are necessary for the initiation of lagging-strand DNA synthesis from the origin of light-strand DNA replication (OriL).</text>
</comment>
<comment type="catalytic activity">
    <reaction evidence="4 5">
        <text>RNA(n) + a ribonucleoside 5'-triphosphate = RNA(n+1) + diphosphate</text>
        <dbReference type="Rhea" id="RHEA:21248"/>
        <dbReference type="Rhea" id="RHEA-COMP:14527"/>
        <dbReference type="Rhea" id="RHEA-COMP:17342"/>
        <dbReference type="ChEBI" id="CHEBI:33019"/>
        <dbReference type="ChEBI" id="CHEBI:61557"/>
        <dbReference type="ChEBI" id="CHEBI:140395"/>
        <dbReference type="EC" id="2.7.7.6"/>
    </reaction>
</comment>
<comment type="subunit">
    <text evidence="2 7">Homodimer. Component of the mitochondrial transcription initiation complex, composed at least of TFB2M, TFAM and POLRMT. In this complex TFAM recruits POLRMT to the promoter whereas TFB2M induces structural changes in POLRMT to enable promoter opening and trapping of the DNA non-template strand (By similarity). Upon metabolic stress, forms a complex composed of FOXO3, SIRT3 and mitochondrial RNA polymerase POLRMT; the complex is recruited to mtDNA in a SIRT3-dependent manner (PubMed:23283301). Also forms a complex composed of FOXO3, SIRT3, TFAM and POLRMT. Interacts with TFB1M and TFB2M, leading to the stimulation of transcription. Interacts with TEFM. Interacts with MTRES1 (By similarity).</text>
</comment>
<comment type="subcellular location">
    <subcellularLocation>
        <location evidence="7">Mitochondrion</location>
    </subcellularLocation>
</comment>
<comment type="similarity">
    <text evidence="8">Belongs to the phage and mitochondrial RNA polymerase family.</text>
</comment>
<proteinExistence type="evidence at protein level"/>
<reference key="1">
    <citation type="journal article" date="2005" name="Science">
        <title>The transcriptional landscape of the mammalian genome.</title>
        <authorList>
            <person name="Carninci P."/>
            <person name="Kasukawa T."/>
            <person name="Katayama S."/>
            <person name="Gough J."/>
            <person name="Frith M.C."/>
            <person name="Maeda N."/>
            <person name="Oyama R."/>
            <person name="Ravasi T."/>
            <person name="Lenhard B."/>
            <person name="Wells C."/>
            <person name="Kodzius R."/>
            <person name="Shimokawa K."/>
            <person name="Bajic V.B."/>
            <person name="Brenner S.E."/>
            <person name="Batalov S."/>
            <person name="Forrest A.R."/>
            <person name="Zavolan M."/>
            <person name="Davis M.J."/>
            <person name="Wilming L.G."/>
            <person name="Aidinis V."/>
            <person name="Allen J.E."/>
            <person name="Ambesi-Impiombato A."/>
            <person name="Apweiler R."/>
            <person name="Aturaliya R.N."/>
            <person name="Bailey T.L."/>
            <person name="Bansal M."/>
            <person name="Baxter L."/>
            <person name="Beisel K.W."/>
            <person name="Bersano T."/>
            <person name="Bono H."/>
            <person name="Chalk A.M."/>
            <person name="Chiu K.P."/>
            <person name="Choudhary V."/>
            <person name="Christoffels A."/>
            <person name="Clutterbuck D.R."/>
            <person name="Crowe M.L."/>
            <person name="Dalla E."/>
            <person name="Dalrymple B.P."/>
            <person name="de Bono B."/>
            <person name="Della Gatta G."/>
            <person name="di Bernardo D."/>
            <person name="Down T."/>
            <person name="Engstrom P."/>
            <person name="Fagiolini M."/>
            <person name="Faulkner G."/>
            <person name="Fletcher C.F."/>
            <person name="Fukushima T."/>
            <person name="Furuno M."/>
            <person name="Futaki S."/>
            <person name="Gariboldi M."/>
            <person name="Georgii-Hemming P."/>
            <person name="Gingeras T.R."/>
            <person name="Gojobori T."/>
            <person name="Green R.E."/>
            <person name="Gustincich S."/>
            <person name="Harbers M."/>
            <person name="Hayashi Y."/>
            <person name="Hensch T.K."/>
            <person name="Hirokawa N."/>
            <person name="Hill D."/>
            <person name="Huminiecki L."/>
            <person name="Iacono M."/>
            <person name="Ikeo K."/>
            <person name="Iwama A."/>
            <person name="Ishikawa T."/>
            <person name="Jakt M."/>
            <person name="Kanapin A."/>
            <person name="Katoh M."/>
            <person name="Kawasawa Y."/>
            <person name="Kelso J."/>
            <person name="Kitamura H."/>
            <person name="Kitano H."/>
            <person name="Kollias G."/>
            <person name="Krishnan S.P."/>
            <person name="Kruger A."/>
            <person name="Kummerfeld S.K."/>
            <person name="Kurochkin I.V."/>
            <person name="Lareau L.F."/>
            <person name="Lazarevic D."/>
            <person name="Lipovich L."/>
            <person name="Liu J."/>
            <person name="Liuni S."/>
            <person name="McWilliam S."/>
            <person name="Madan Babu M."/>
            <person name="Madera M."/>
            <person name="Marchionni L."/>
            <person name="Matsuda H."/>
            <person name="Matsuzawa S."/>
            <person name="Miki H."/>
            <person name="Mignone F."/>
            <person name="Miyake S."/>
            <person name="Morris K."/>
            <person name="Mottagui-Tabar S."/>
            <person name="Mulder N."/>
            <person name="Nakano N."/>
            <person name="Nakauchi H."/>
            <person name="Ng P."/>
            <person name="Nilsson R."/>
            <person name="Nishiguchi S."/>
            <person name="Nishikawa S."/>
            <person name="Nori F."/>
            <person name="Ohara O."/>
            <person name="Okazaki Y."/>
            <person name="Orlando V."/>
            <person name="Pang K.C."/>
            <person name="Pavan W.J."/>
            <person name="Pavesi G."/>
            <person name="Pesole G."/>
            <person name="Petrovsky N."/>
            <person name="Piazza S."/>
            <person name="Reed J."/>
            <person name="Reid J.F."/>
            <person name="Ring B.Z."/>
            <person name="Ringwald M."/>
            <person name="Rost B."/>
            <person name="Ruan Y."/>
            <person name="Salzberg S.L."/>
            <person name="Sandelin A."/>
            <person name="Schneider C."/>
            <person name="Schoenbach C."/>
            <person name="Sekiguchi K."/>
            <person name="Semple C.A."/>
            <person name="Seno S."/>
            <person name="Sessa L."/>
            <person name="Sheng Y."/>
            <person name="Shibata Y."/>
            <person name="Shimada H."/>
            <person name="Shimada K."/>
            <person name="Silva D."/>
            <person name="Sinclair B."/>
            <person name="Sperling S."/>
            <person name="Stupka E."/>
            <person name="Sugiura K."/>
            <person name="Sultana R."/>
            <person name="Takenaka Y."/>
            <person name="Taki K."/>
            <person name="Tammoja K."/>
            <person name="Tan S.L."/>
            <person name="Tang S."/>
            <person name="Taylor M.S."/>
            <person name="Tegner J."/>
            <person name="Teichmann S.A."/>
            <person name="Ueda H.R."/>
            <person name="van Nimwegen E."/>
            <person name="Verardo R."/>
            <person name="Wei C.L."/>
            <person name="Yagi K."/>
            <person name="Yamanishi H."/>
            <person name="Zabarovsky E."/>
            <person name="Zhu S."/>
            <person name="Zimmer A."/>
            <person name="Hide W."/>
            <person name="Bult C."/>
            <person name="Grimmond S.M."/>
            <person name="Teasdale R.D."/>
            <person name="Liu E.T."/>
            <person name="Brusic V."/>
            <person name="Quackenbush J."/>
            <person name="Wahlestedt C."/>
            <person name="Mattick J.S."/>
            <person name="Hume D.A."/>
            <person name="Kai C."/>
            <person name="Sasaki D."/>
            <person name="Tomaru Y."/>
            <person name="Fukuda S."/>
            <person name="Kanamori-Katayama M."/>
            <person name="Suzuki M."/>
            <person name="Aoki J."/>
            <person name="Arakawa T."/>
            <person name="Iida J."/>
            <person name="Imamura K."/>
            <person name="Itoh M."/>
            <person name="Kato T."/>
            <person name="Kawaji H."/>
            <person name="Kawagashira N."/>
            <person name="Kawashima T."/>
            <person name="Kojima M."/>
            <person name="Kondo S."/>
            <person name="Konno H."/>
            <person name="Nakano K."/>
            <person name="Ninomiya N."/>
            <person name="Nishio T."/>
            <person name="Okada M."/>
            <person name="Plessy C."/>
            <person name="Shibata K."/>
            <person name="Shiraki T."/>
            <person name="Suzuki S."/>
            <person name="Tagami M."/>
            <person name="Waki K."/>
            <person name="Watahiki A."/>
            <person name="Okamura-Oho Y."/>
            <person name="Suzuki H."/>
            <person name="Kawai J."/>
            <person name="Hayashizaki Y."/>
        </authorList>
    </citation>
    <scope>NUCLEOTIDE SEQUENCE [LARGE SCALE MRNA]</scope>
    <source>
        <strain>C57BL/6J</strain>
        <tissue>Eye</tissue>
        <tissue>Mammary gland</tissue>
    </source>
</reference>
<reference key="2">
    <citation type="journal article" date="2010" name="Cell">
        <title>A tissue-specific atlas of mouse protein phosphorylation and expression.</title>
        <authorList>
            <person name="Huttlin E.L."/>
            <person name="Jedrychowski M.P."/>
            <person name="Elias J.E."/>
            <person name="Goswami T."/>
            <person name="Rad R."/>
            <person name="Beausoleil S.A."/>
            <person name="Villen J."/>
            <person name="Haas W."/>
            <person name="Sowa M.E."/>
            <person name="Gygi S.P."/>
        </authorList>
    </citation>
    <scope>IDENTIFICATION BY MASS SPECTROMETRY [LARGE SCALE ANALYSIS]</scope>
    <source>
        <tissue>Brown adipose tissue</tissue>
        <tissue>Heart</tissue>
    </source>
</reference>
<reference key="3">
    <citation type="journal article" date="2013" name="Cell. Mol. Life Sci.">
        <title>A novel AMPK-dependent FoxO3A-SIRT3 intramitochondrial complex sensing glucose levels.</title>
        <authorList>
            <person name="Peserico A."/>
            <person name="Chiacchiera F."/>
            <person name="Grossi V."/>
            <person name="Matrone A."/>
            <person name="Latorre D."/>
            <person name="Simonatto M."/>
            <person name="Fusella A."/>
            <person name="Ryall J.G."/>
            <person name="Finley L.W."/>
            <person name="Haigis M.C."/>
            <person name="Villani G."/>
            <person name="Puri P.L."/>
            <person name="Sartorelli V."/>
            <person name="Simone C."/>
        </authorList>
    </citation>
    <scope>IDENTIFICATION IN A COMPLEX WITH SIRT3 AND FOXO3</scope>
    <scope>SUBCELLULAR LOCATION</scope>
</reference>
<organism>
    <name type="scientific">Mus musculus</name>
    <name type="common">Mouse</name>
    <dbReference type="NCBI Taxonomy" id="10090"/>
    <lineage>
        <taxon>Eukaryota</taxon>
        <taxon>Metazoa</taxon>
        <taxon>Chordata</taxon>
        <taxon>Craniata</taxon>
        <taxon>Vertebrata</taxon>
        <taxon>Euteleostomi</taxon>
        <taxon>Mammalia</taxon>
        <taxon>Eutheria</taxon>
        <taxon>Euarchontoglires</taxon>
        <taxon>Glires</taxon>
        <taxon>Rodentia</taxon>
        <taxon>Myomorpha</taxon>
        <taxon>Muroidea</taxon>
        <taxon>Muridae</taxon>
        <taxon>Murinae</taxon>
        <taxon>Mus</taxon>
        <taxon>Mus</taxon>
    </lineage>
</organism>
<accession>Q8BKF1</accession>
<accession>Q8BJE0</accession>
<protein>
    <recommendedName>
        <fullName evidence="8">DNA-directed RNA polymerase, mitochondrial</fullName>
        <shortName>MtRPOL</shortName>
        <ecNumber>2.7.7.6</ecNumber>
    </recommendedName>
</protein>
<name>RPOM_MOUSE</name>
<dbReference type="EC" id="2.7.7.6"/>
<dbReference type="EMBL" id="AK053356">
    <property type="protein sequence ID" value="BAC35360.1"/>
    <property type="molecule type" value="mRNA"/>
</dbReference>
<dbReference type="EMBL" id="AK085666">
    <property type="protein sequence ID" value="BAC39500.1"/>
    <property type="molecule type" value="mRNA"/>
</dbReference>
<dbReference type="CCDS" id="CCDS23987.1"/>
<dbReference type="RefSeq" id="NP_766139.2">
    <property type="nucleotide sequence ID" value="NM_172551.4"/>
</dbReference>
<dbReference type="SMR" id="Q8BKF1"/>
<dbReference type="BioGRID" id="229707">
    <property type="interactions" value="4"/>
</dbReference>
<dbReference type="FunCoup" id="Q8BKF1">
    <property type="interactions" value="1443"/>
</dbReference>
<dbReference type="STRING" id="10090.ENSMUSP00000020580"/>
<dbReference type="GlyGen" id="Q8BKF1">
    <property type="glycosylation" value="1 site"/>
</dbReference>
<dbReference type="iPTMnet" id="Q8BKF1"/>
<dbReference type="PhosphoSitePlus" id="Q8BKF1"/>
<dbReference type="PaxDb" id="10090-ENSMUSP00000020580"/>
<dbReference type="ProteomicsDB" id="299927"/>
<dbReference type="Pumba" id="Q8BKF1"/>
<dbReference type="Antibodypedia" id="1270">
    <property type="antibodies" value="105 antibodies from 29 providers"/>
</dbReference>
<dbReference type="DNASU" id="216151"/>
<dbReference type="Ensembl" id="ENSMUST00000020580.13">
    <property type="protein sequence ID" value="ENSMUSP00000020580.7"/>
    <property type="gene ID" value="ENSMUSG00000020329.13"/>
</dbReference>
<dbReference type="GeneID" id="216151"/>
<dbReference type="KEGG" id="mmu:216151"/>
<dbReference type="UCSC" id="uc007fzo.2">
    <property type="organism name" value="mouse"/>
</dbReference>
<dbReference type="AGR" id="MGI:1915843"/>
<dbReference type="CTD" id="5442"/>
<dbReference type="MGI" id="MGI:1915843">
    <property type="gene designation" value="Polrmt"/>
</dbReference>
<dbReference type="VEuPathDB" id="HostDB:ENSMUSG00000020329"/>
<dbReference type="eggNOG" id="KOG1038">
    <property type="taxonomic scope" value="Eukaryota"/>
</dbReference>
<dbReference type="GeneTree" id="ENSGT00390000008060"/>
<dbReference type="InParanoid" id="Q8BKF1"/>
<dbReference type="OMA" id="WWAKSDE"/>
<dbReference type="OrthoDB" id="276422at2759"/>
<dbReference type="PhylomeDB" id="Q8BKF1"/>
<dbReference type="TreeFam" id="TF105700"/>
<dbReference type="Reactome" id="R-MMU-163282">
    <property type="pathway name" value="Mitochondrial transcription initiation"/>
</dbReference>
<dbReference type="Reactome" id="R-MMU-9913635">
    <property type="pathway name" value="Strand-asynchronous mitochondrial DNA replication"/>
</dbReference>
<dbReference type="BioGRID-ORCS" id="216151">
    <property type="hits" value="23 hits in 79 CRISPR screens"/>
</dbReference>
<dbReference type="ChiTaRS" id="Polrmt">
    <property type="organism name" value="mouse"/>
</dbReference>
<dbReference type="PRO" id="PR:Q8BKF1"/>
<dbReference type="Proteomes" id="UP000000589">
    <property type="component" value="Chromosome 10"/>
</dbReference>
<dbReference type="RNAct" id="Q8BKF1">
    <property type="molecule type" value="protein"/>
</dbReference>
<dbReference type="Bgee" id="ENSMUSG00000020329">
    <property type="expression patterns" value="Expressed in heart right ventricle and 268 other cell types or tissues"/>
</dbReference>
<dbReference type="ExpressionAtlas" id="Q8BKF1">
    <property type="expression patterns" value="baseline and differential"/>
</dbReference>
<dbReference type="GO" id="GO:0000428">
    <property type="term" value="C:DNA-directed RNA polymerase complex"/>
    <property type="evidence" value="ECO:0007669"/>
    <property type="project" value="UniProtKB-KW"/>
</dbReference>
<dbReference type="GO" id="GO:0042645">
    <property type="term" value="C:mitochondrial nucleoid"/>
    <property type="evidence" value="ECO:0007669"/>
    <property type="project" value="Ensembl"/>
</dbReference>
<dbReference type="GO" id="GO:0005739">
    <property type="term" value="C:mitochondrion"/>
    <property type="evidence" value="ECO:0007005"/>
    <property type="project" value="MGI"/>
</dbReference>
<dbReference type="GO" id="GO:0032991">
    <property type="term" value="C:protein-containing complex"/>
    <property type="evidence" value="ECO:0000314"/>
    <property type="project" value="UniProtKB"/>
</dbReference>
<dbReference type="GO" id="GO:0000175">
    <property type="term" value="F:3'-5'-RNA exonuclease activity"/>
    <property type="evidence" value="ECO:0007669"/>
    <property type="project" value="Ensembl"/>
</dbReference>
<dbReference type="GO" id="GO:0003899">
    <property type="term" value="F:DNA-directed RNA polymerase activity"/>
    <property type="evidence" value="ECO:0000250"/>
    <property type="project" value="UniProtKB"/>
</dbReference>
<dbReference type="GO" id="GO:0043565">
    <property type="term" value="F:sequence-specific DNA binding"/>
    <property type="evidence" value="ECO:0000314"/>
    <property type="project" value="UniProtKB"/>
</dbReference>
<dbReference type="GO" id="GO:0006391">
    <property type="term" value="P:transcription initiation at mitochondrial promoter"/>
    <property type="evidence" value="ECO:0007669"/>
    <property type="project" value="Ensembl"/>
</dbReference>
<dbReference type="FunFam" id="1.10.1320.10:FF:000002">
    <property type="entry name" value="DNA-directed RNA polymerase"/>
    <property type="match status" value="1"/>
</dbReference>
<dbReference type="FunFam" id="1.10.150.20:FF:000031">
    <property type="entry name" value="DNA-directed RNA polymerase"/>
    <property type="match status" value="1"/>
</dbReference>
<dbReference type="FunFam" id="1.10.287.280:FF:000001">
    <property type="entry name" value="DNA-directed RNA polymerase"/>
    <property type="match status" value="1"/>
</dbReference>
<dbReference type="FunFam" id="1.25.40.10:FF:000785">
    <property type="entry name" value="DNA-directed RNA polymerase"/>
    <property type="match status" value="1"/>
</dbReference>
<dbReference type="Gene3D" id="1.10.287.280">
    <property type="match status" value="1"/>
</dbReference>
<dbReference type="Gene3D" id="1.10.150.20">
    <property type="entry name" value="5' to 3' exonuclease, C-terminal subdomain"/>
    <property type="match status" value="1"/>
</dbReference>
<dbReference type="Gene3D" id="1.10.1320.10">
    <property type="entry name" value="DNA-directed RNA polymerase, N-terminal domain"/>
    <property type="match status" value="1"/>
</dbReference>
<dbReference type="Gene3D" id="1.25.40.10">
    <property type="entry name" value="Tetratricopeptide repeat domain"/>
    <property type="match status" value="1"/>
</dbReference>
<dbReference type="InterPro" id="IPR046950">
    <property type="entry name" value="DNA-dir_Rpol_C_phage-type"/>
</dbReference>
<dbReference type="InterPro" id="IPR002092">
    <property type="entry name" value="DNA-dir_Rpol_phage-type"/>
</dbReference>
<dbReference type="InterPro" id="IPR043502">
    <property type="entry name" value="DNA/RNA_pol_sf"/>
</dbReference>
<dbReference type="InterPro" id="IPR002885">
    <property type="entry name" value="Pentatricopeptide_rpt"/>
</dbReference>
<dbReference type="InterPro" id="IPR037159">
    <property type="entry name" value="RNA_POL_N_sf"/>
</dbReference>
<dbReference type="InterPro" id="IPR029262">
    <property type="entry name" value="RPOL_N"/>
</dbReference>
<dbReference type="InterPro" id="IPR011990">
    <property type="entry name" value="TPR-like_helical_dom_sf"/>
</dbReference>
<dbReference type="NCBIfam" id="TIGR00756">
    <property type="entry name" value="PPR"/>
    <property type="match status" value="1"/>
</dbReference>
<dbReference type="PANTHER" id="PTHR10102">
    <property type="entry name" value="DNA-DIRECTED RNA POLYMERASE, MITOCHONDRIAL"/>
    <property type="match status" value="1"/>
</dbReference>
<dbReference type="PANTHER" id="PTHR10102:SF0">
    <property type="entry name" value="DNA-DIRECTED RNA POLYMERASE, MITOCHONDRIAL"/>
    <property type="match status" value="1"/>
</dbReference>
<dbReference type="Pfam" id="PF00940">
    <property type="entry name" value="RNA_pol"/>
    <property type="match status" value="1"/>
</dbReference>
<dbReference type="Pfam" id="PF14700">
    <property type="entry name" value="RPOL_N"/>
    <property type="match status" value="1"/>
</dbReference>
<dbReference type="SMART" id="SM01311">
    <property type="entry name" value="RPOL_N"/>
    <property type="match status" value="1"/>
</dbReference>
<dbReference type="SUPFAM" id="SSF56672">
    <property type="entry name" value="DNA/RNA polymerases"/>
    <property type="match status" value="1"/>
</dbReference>
<dbReference type="PROSITE" id="PS51375">
    <property type="entry name" value="PPR"/>
    <property type="match status" value="2"/>
</dbReference>
<dbReference type="PROSITE" id="PS00900">
    <property type="entry name" value="RNA_POL_PHAGE_1"/>
    <property type="match status" value="1"/>
</dbReference>
<dbReference type="PROSITE" id="PS00489">
    <property type="entry name" value="RNA_POL_PHAGE_2"/>
    <property type="match status" value="1"/>
</dbReference>
<evidence type="ECO:0000250" key="1"/>
<evidence type="ECO:0000250" key="2">
    <source>
        <dbReference type="UniProtKB" id="O00411"/>
    </source>
</evidence>
<evidence type="ECO:0000255" key="3"/>
<evidence type="ECO:0000255" key="4">
    <source>
        <dbReference type="PROSITE-ProRule" id="PRU10031"/>
    </source>
</evidence>
<evidence type="ECO:0000255" key="5">
    <source>
        <dbReference type="PROSITE-ProRule" id="PRU10032"/>
    </source>
</evidence>
<evidence type="ECO:0000256" key="6">
    <source>
        <dbReference type="SAM" id="MobiDB-lite"/>
    </source>
</evidence>
<evidence type="ECO:0000269" key="7">
    <source>
    </source>
</evidence>
<evidence type="ECO:0000305" key="8"/>
<evidence type="ECO:0000312" key="9">
    <source>
        <dbReference type="MGI" id="MGI:1915843"/>
    </source>
</evidence>
<keyword id="KW-0240">DNA-directed RNA polymerase</keyword>
<keyword id="KW-0496">Mitochondrion</keyword>
<keyword id="KW-0548">Nucleotidyltransferase</keyword>
<keyword id="KW-1185">Reference proteome</keyword>
<keyword id="KW-0677">Repeat</keyword>
<keyword id="KW-0804">Transcription</keyword>
<keyword id="KW-0808">Transferase</keyword>
<keyword id="KW-0809">Transit peptide</keyword>